<reference key="1">
    <citation type="journal article" date="2001" name="Nature">
        <title>Genome sequence of enterohaemorrhagic Escherichia coli O157:H7.</title>
        <authorList>
            <person name="Perna N.T."/>
            <person name="Plunkett G. III"/>
            <person name="Burland V."/>
            <person name="Mau B."/>
            <person name="Glasner J.D."/>
            <person name="Rose D.J."/>
            <person name="Mayhew G.F."/>
            <person name="Evans P.S."/>
            <person name="Gregor J."/>
            <person name="Kirkpatrick H.A."/>
            <person name="Posfai G."/>
            <person name="Hackett J."/>
            <person name="Klink S."/>
            <person name="Boutin A."/>
            <person name="Shao Y."/>
            <person name="Miller L."/>
            <person name="Grotbeck E.J."/>
            <person name="Davis N.W."/>
            <person name="Lim A."/>
            <person name="Dimalanta E.T."/>
            <person name="Potamousis K."/>
            <person name="Apodaca J."/>
            <person name="Anantharaman T.S."/>
            <person name="Lin J."/>
            <person name="Yen G."/>
            <person name="Schwartz D.C."/>
            <person name="Welch R.A."/>
            <person name="Blattner F.R."/>
        </authorList>
    </citation>
    <scope>NUCLEOTIDE SEQUENCE [LARGE SCALE GENOMIC DNA]</scope>
    <source>
        <strain>O157:H7 / EDL933 / ATCC 700927 / EHEC</strain>
    </source>
</reference>
<reference key="2">
    <citation type="journal article" date="2001" name="DNA Res.">
        <title>Complete genome sequence of enterohemorrhagic Escherichia coli O157:H7 and genomic comparison with a laboratory strain K-12.</title>
        <authorList>
            <person name="Hayashi T."/>
            <person name="Makino K."/>
            <person name="Ohnishi M."/>
            <person name="Kurokawa K."/>
            <person name="Ishii K."/>
            <person name="Yokoyama K."/>
            <person name="Han C.-G."/>
            <person name="Ohtsubo E."/>
            <person name="Nakayama K."/>
            <person name="Murata T."/>
            <person name="Tanaka M."/>
            <person name="Tobe T."/>
            <person name="Iida T."/>
            <person name="Takami H."/>
            <person name="Honda T."/>
            <person name="Sasakawa C."/>
            <person name="Ogasawara N."/>
            <person name="Yasunaga T."/>
            <person name="Kuhara S."/>
            <person name="Shiba T."/>
            <person name="Hattori M."/>
            <person name="Shinagawa H."/>
        </authorList>
    </citation>
    <scope>NUCLEOTIDE SEQUENCE [LARGE SCALE GENOMIC DNA]</scope>
    <source>
        <strain>O157:H7 / Sakai / RIMD 0509952 / EHEC</strain>
    </source>
</reference>
<protein>
    <recommendedName>
        <fullName evidence="1">Phosphogluconate dehydratase</fullName>
        <ecNumber evidence="1">4.2.1.12</ecNumber>
    </recommendedName>
</protein>
<accession>P0ADF7</accession>
<accession>P25530</accession>
<gene>
    <name evidence="1" type="primary">edd</name>
    <name type="ordered locus">Z2903</name>
    <name type="ordered locus">ECs2561</name>
</gene>
<feature type="chain" id="PRO_0000103554" description="Phosphogluconate dehydratase">
    <location>
        <begin position="1"/>
        <end position="603"/>
    </location>
</feature>
<feature type="binding site" evidence="1">
    <location>
        <position position="154"/>
    </location>
    <ligand>
        <name>[4Fe-4S] cluster</name>
        <dbReference type="ChEBI" id="CHEBI:49883"/>
    </ligand>
</feature>
<feature type="binding site" evidence="1">
    <location>
        <position position="221"/>
    </location>
    <ligand>
        <name>[4Fe-4S] cluster</name>
        <dbReference type="ChEBI" id="CHEBI:49883"/>
    </ligand>
</feature>
<dbReference type="EC" id="4.2.1.12" evidence="1"/>
<dbReference type="EMBL" id="AE005174">
    <property type="protein sequence ID" value="AAG56841.1"/>
    <property type="molecule type" value="Genomic_DNA"/>
</dbReference>
<dbReference type="EMBL" id="BA000007">
    <property type="protein sequence ID" value="BAB35984.1"/>
    <property type="molecule type" value="Genomic_DNA"/>
</dbReference>
<dbReference type="PIR" id="A98949">
    <property type="entry name" value="A98949"/>
</dbReference>
<dbReference type="RefSeq" id="NP_310588.1">
    <property type="nucleotide sequence ID" value="NC_002695.1"/>
</dbReference>
<dbReference type="RefSeq" id="WP_001069467.1">
    <property type="nucleotide sequence ID" value="NZ_VOAI01000010.1"/>
</dbReference>
<dbReference type="SMR" id="P0ADF7"/>
<dbReference type="STRING" id="155864.Z2903"/>
<dbReference type="GeneID" id="86859389"/>
<dbReference type="GeneID" id="912867"/>
<dbReference type="KEGG" id="ece:Z2903"/>
<dbReference type="KEGG" id="ecs:ECs_2561"/>
<dbReference type="PATRIC" id="fig|386585.9.peg.2684"/>
<dbReference type="eggNOG" id="COG0129">
    <property type="taxonomic scope" value="Bacteria"/>
</dbReference>
<dbReference type="HOGENOM" id="CLU_014271_1_2_6"/>
<dbReference type="OMA" id="HLIHWVA"/>
<dbReference type="UniPathway" id="UPA00226"/>
<dbReference type="Proteomes" id="UP000000558">
    <property type="component" value="Chromosome"/>
</dbReference>
<dbReference type="Proteomes" id="UP000002519">
    <property type="component" value="Chromosome"/>
</dbReference>
<dbReference type="GO" id="GO:0005829">
    <property type="term" value="C:cytosol"/>
    <property type="evidence" value="ECO:0007669"/>
    <property type="project" value="TreeGrafter"/>
</dbReference>
<dbReference type="GO" id="GO:0051539">
    <property type="term" value="F:4 iron, 4 sulfur cluster binding"/>
    <property type="evidence" value="ECO:0007669"/>
    <property type="project" value="UniProtKB-UniRule"/>
</dbReference>
<dbReference type="GO" id="GO:0046872">
    <property type="term" value="F:metal ion binding"/>
    <property type="evidence" value="ECO:0007669"/>
    <property type="project" value="UniProtKB-KW"/>
</dbReference>
<dbReference type="GO" id="GO:0004456">
    <property type="term" value="F:phosphogluconate dehydratase activity"/>
    <property type="evidence" value="ECO:0007669"/>
    <property type="project" value="UniProtKB-UniRule"/>
</dbReference>
<dbReference type="GO" id="GO:0019521">
    <property type="term" value="P:D-gluconate metabolic process"/>
    <property type="evidence" value="ECO:0007669"/>
    <property type="project" value="UniProtKB-KW"/>
</dbReference>
<dbReference type="GO" id="GO:0009255">
    <property type="term" value="P:Entner-Doudoroff pathway through 6-phosphogluconate"/>
    <property type="evidence" value="ECO:0007669"/>
    <property type="project" value="UniProtKB-UniRule"/>
</dbReference>
<dbReference type="FunFam" id="3.50.30.80:FF:000001">
    <property type="entry name" value="Dihydroxy-acid dehydratase"/>
    <property type="match status" value="1"/>
</dbReference>
<dbReference type="Gene3D" id="3.50.30.80">
    <property type="entry name" value="IlvD/EDD C-terminal domain-like"/>
    <property type="match status" value="1"/>
</dbReference>
<dbReference type="HAMAP" id="MF_02094">
    <property type="entry name" value="Edd"/>
    <property type="match status" value="1"/>
</dbReference>
<dbReference type="InterPro" id="IPR004786">
    <property type="entry name" value="6-phosphgluc_deHydtase"/>
</dbReference>
<dbReference type="InterPro" id="IPR042096">
    <property type="entry name" value="Dihydro-acid_dehy_C"/>
</dbReference>
<dbReference type="InterPro" id="IPR020558">
    <property type="entry name" value="DiOHA_6PGluconate_deHydtase_CS"/>
</dbReference>
<dbReference type="InterPro" id="IPR056740">
    <property type="entry name" value="ILV_EDD_C"/>
</dbReference>
<dbReference type="InterPro" id="IPR000581">
    <property type="entry name" value="ILV_EDD_N"/>
</dbReference>
<dbReference type="InterPro" id="IPR037237">
    <property type="entry name" value="IlvD/EDD_N"/>
</dbReference>
<dbReference type="NCBIfam" id="TIGR01196">
    <property type="entry name" value="edd"/>
    <property type="match status" value="1"/>
</dbReference>
<dbReference type="PANTHER" id="PTHR43661">
    <property type="entry name" value="D-XYLONATE DEHYDRATASE"/>
    <property type="match status" value="1"/>
</dbReference>
<dbReference type="PANTHER" id="PTHR43661:SF1">
    <property type="entry name" value="PHOSPHOGLUCONATE DEHYDRATASE"/>
    <property type="match status" value="1"/>
</dbReference>
<dbReference type="Pfam" id="PF24877">
    <property type="entry name" value="ILV_EDD_C"/>
    <property type="match status" value="1"/>
</dbReference>
<dbReference type="Pfam" id="PF00920">
    <property type="entry name" value="ILVD_EDD_N"/>
    <property type="match status" value="1"/>
</dbReference>
<dbReference type="SUPFAM" id="SSF143975">
    <property type="entry name" value="IlvD/EDD N-terminal domain-like"/>
    <property type="match status" value="1"/>
</dbReference>
<dbReference type="SUPFAM" id="SSF52016">
    <property type="entry name" value="LeuD/IlvD-like"/>
    <property type="match status" value="1"/>
</dbReference>
<dbReference type="PROSITE" id="PS00886">
    <property type="entry name" value="ILVD_EDD_1"/>
    <property type="match status" value="1"/>
</dbReference>
<dbReference type="PROSITE" id="PS00887">
    <property type="entry name" value="ILVD_EDD_2"/>
    <property type="match status" value="1"/>
</dbReference>
<keyword id="KW-0004">4Fe-4S</keyword>
<keyword id="KW-0119">Carbohydrate metabolism</keyword>
<keyword id="KW-0311">Gluconate utilization</keyword>
<keyword id="KW-0408">Iron</keyword>
<keyword id="KW-0411">Iron-sulfur</keyword>
<keyword id="KW-0456">Lyase</keyword>
<keyword id="KW-0479">Metal-binding</keyword>
<keyword id="KW-1185">Reference proteome</keyword>
<evidence type="ECO:0000255" key="1">
    <source>
        <dbReference type="HAMAP-Rule" id="MF_02094"/>
    </source>
</evidence>
<evidence type="ECO:0000305" key="2"/>
<sequence>MNPQLLRVTNRIIERSRETRSAYLARIEQAKTSTVHRSQLACGNLAHGFAACQPEDKASLKSMLRNNIAIITSYNDMLSAHQPYEHYPEIIRKALHEANAVGQVAGGVPAMCDGVTQGQDGMELSLLSREVIAMSAAVGLSHNMFDGALFLGVCDKIVPGLTMAALSFGHLPAVFVPSGPMASGLPNKEKVRIRQLYAEGKVDRMALLESEAASYHAPGTCTFYGTANTNQMVVEFMGMQLPGSSFVHPDSPLRDALTAAAARQVTRMTGNGNEWMPIGKMIDEKVVVNGIVALLATGGSTNHTMHLVAMARAAGIQINWDDFSDLSDVVPLMARLYPNGPADINHFQAAGGVPVLVRELLKAGLLHEDVNTVAGFGLSRYTLEPWLNNGELDWREGAEKSLDSNVIASFEQPFSHHGGTKVLSGNLGRAVMKTSAVPVENQVIEAPAVVFESQHDVMPAFEAGLLDRDCVVVVRHQGPKANGMPELHKLMPPLGVLLDRCFKIALVTDGRLSGASGKVPSAIHVTPEAYDGGLLAKVRDGDIIRVNGQTGELTLLVDEAELAAREPHIPDLSASRVGTGRELFSALREKLSGAEQGATCITF</sequence>
<name>EDD_ECO57</name>
<organism>
    <name type="scientific">Escherichia coli O157:H7</name>
    <dbReference type="NCBI Taxonomy" id="83334"/>
    <lineage>
        <taxon>Bacteria</taxon>
        <taxon>Pseudomonadati</taxon>
        <taxon>Pseudomonadota</taxon>
        <taxon>Gammaproteobacteria</taxon>
        <taxon>Enterobacterales</taxon>
        <taxon>Enterobacteriaceae</taxon>
        <taxon>Escherichia</taxon>
    </lineage>
</organism>
<comment type="function">
    <text evidence="1">Catalyzes the dehydration of 6-phospho-D-gluconate to 2-dehydro-3-deoxy-6-phospho-D-gluconate.</text>
</comment>
<comment type="catalytic activity">
    <reaction evidence="1">
        <text>6-phospho-D-gluconate = 2-dehydro-3-deoxy-6-phospho-D-gluconate + H2O</text>
        <dbReference type="Rhea" id="RHEA:17277"/>
        <dbReference type="ChEBI" id="CHEBI:15377"/>
        <dbReference type="ChEBI" id="CHEBI:57569"/>
        <dbReference type="ChEBI" id="CHEBI:58759"/>
        <dbReference type="EC" id="4.2.1.12"/>
    </reaction>
</comment>
<comment type="cofactor">
    <cofactor evidence="1">
        <name>[4Fe-4S] cluster</name>
        <dbReference type="ChEBI" id="CHEBI:49883"/>
    </cofactor>
    <text evidence="1">Binds 1 [4Fe-4S] cluster.</text>
</comment>
<comment type="pathway">
    <text evidence="1">Carbohydrate metabolism; Entner-Doudoroff pathway.</text>
</comment>
<comment type="similarity">
    <text evidence="1 2">Belongs to the IlvD/Edd family.</text>
</comment>
<proteinExistence type="inferred from homology"/>